<accession>Q6CLA4</accession>
<dbReference type="EMBL" id="CR382126">
    <property type="protein sequence ID" value="CAG97993.1"/>
    <property type="molecule type" value="Genomic_DNA"/>
</dbReference>
<dbReference type="RefSeq" id="XP_455285.1">
    <property type="nucleotide sequence ID" value="XM_455285.1"/>
</dbReference>
<dbReference type="SMR" id="Q6CLA4"/>
<dbReference type="FunCoup" id="Q6CLA4">
    <property type="interactions" value="299"/>
</dbReference>
<dbReference type="STRING" id="284590.Q6CLA4"/>
<dbReference type="PaxDb" id="284590-Q6CLA4"/>
<dbReference type="KEGG" id="kla:KLLA0_F04543g"/>
<dbReference type="eggNOG" id="ENOG502S1G1">
    <property type="taxonomic scope" value="Eukaryota"/>
</dbReference>
<dbReference type="HOGENOM" id="CLU_095038_0_0_1"/>
<dbReference type="InParanoid" id="Q6CLA4"/>
<dbReference type="OMA" id="GHAMEAK"/>
<dbReference type="Proteomes" id="UP000000598">
    <property type="component" value="Chromosome F"/>
</dbReference>
<dbReference type="GO" id="GO:0005730">
    <property type="term" value="C:nucleolus"/>
    <property type="evidence" value="ECO:0007669"/>
    <property type="project" value="UniProtKB-SubCell"/>
</dbReference>
<dbReference type="InterPro" id="IPR031404">
    <property type="entry name" value="Rrt14"/>
</dbReference>
<dbReference type="Pfam" id="PF17075">
    <property type="entry name" value="RRT14"/>
    <property type="match status" value="1"/>
</dbReference>
<proteinExistence type="inferred from homology"/>
<protein>
    <recommendedName>
        <fullName>Regulator of rDNA transcription 14</fullName>
    </recommendedName>
</protein>
<organism>
    <name type="scientific">Kluyveromyces lactis (strain ATCC 8585 / CBS 2359 / DSM 70799 / NBRC 1267 / NRRL Y-1140 / WM37)</name>
    <name type="common">Yeast</name>
    <name type="synonym">Candida sphaerica</name>
    <dbReference type="NCBI Taxonomy" id="284590"/>
    <lineage>
        <taxon>Eukaryota</taxon>
        <taxon>Fungi</taxon>
        <taxon>Dikarya</taxon>
        <taxon>Ascomycota</taxon>
        <taxon>Saccharomycotina</taxon>
        <taxon>Saccharomycetes</taxon>
        <taxon>Saccharomycetales</taxon>
        <taxon>Saccharomycetaceae</taxon>
        <taxon>Kluyveromyces</taxon>
    </lineage>
</organism>
<gene>
    <name type="primary">RRT14</name>
    <name type="ordered locus">KLLA0F04543g</name>
</gene>
<reference key="1">
    <citation type="journal article" date="2004" name="Nature">
        <title>Genome evolution in yeasts.</title>
        <authorList>
            <person name="Dujon B."/>
            <person name="Sherman D."/>
            <person name="Fischer G."/>
            <person name="Durrens P."/>
            <person name="Casaregola S."/>
            <person name="Lafontaine I."/>
            <person name="de Montigny J."/>
            <person name="Marck C."/>
            <person name="Neuveglise C."/>
            <person name="Talla E."/>
            <person name="Goffard N."/>
            <person name="Frangeul L."/>
            <person name="Aigle M."/>
            <person name="Anthouard V."/>
            <person name="Babour A."/>
            <person name="Barbe V."/>
            <person name="Barnay S."/>
            <person name="Blanchin S."/>
            <person name="Beckerich J.-M."/>
            <person name="Beyne E."/>
            <person name="Bleykasten C."/>
            <person name="Boisrame A."/>
            <person name="Boyer J."/>
            <person name="Cattolico L."/>
            <person name="Confanioleri F."/>
            <person name="de Daruvar A."/>
            <person name="Despons L."/>
            <person name="Fabre E."/>
            <person name="Fairhead C."/>
            <person name="Ferry-Dumazet H."/>
            <person name="Groppi A."/>
            <person name="Hantraye F."/>
            <person name="Hennequin C."/>
            <person name="Jauniaux N."/>
            <person name="Joyet P."/>
            <person name="Kachouri R."/>
            <person name="Kerrest A."/>
            <person name="Koszul R."/>
            <person name="Lemaire M."/>
            <person name="Lesur I."/>
            <person name="Ma L."/>
            <person name="Muller H."/>
            <person name="Nicaud J.-M."/>
            <person name="Nikolski M."/>
            <person name="Oztas S."/>
            <person name="Ozier-Kalogeropoulos O."/>
            <person name="Pellenz S."/>
            <person name="Potier S."/>
            <person name="Richard G.-F."/>
            <person name="Straub M.-L."/>
            <person name="Suleau A."/>
            <person name="Swennen D."/>
            <person name="Tekaia F."/>
            <person name="Wesolowski-Louvel M."/>
            <person name="Westhof E."/>
            <person name="Wirth B."/>
            <person name="Zeniou-Meyer M."/>
            <person name="Zivanovic Y."/>
            <person name="Bolotin-Fukuhara M."/>
            <person name="Thierry A."/>
            <person name="Bouchier C."/>
            <person name="Caudron B."/>
            <person name="Scarpelli C."/>
            <person name="Gaillardin C."/>
            <person name="Weissenbach J."/>
            <person name="Wincker P."/>
            <person name="Souciet J.-L."/>
        </authorList>
    </citation>
    <scope>NUCLEOTIDE SEQUENCE [LARGE SCALE GENOMIC DNA]</scope>
    <source>
        <strain>ATCC 8585 / CBS 2359 / DSM 70799 / NBRC 1267 / NRRL Y-1140 / WM37</strain>
    </source>
</reference>
<evidence type="ECO:0000250" key="1"/>
<evidence type="ECO:0000256" key="2">
    <source>
        <dbReference type="SAM" id="MobiDB-lite"/>
    </source>
</evidence>
<evidence type="ECO:0000305" key="3"/>
<sequence>MSSLAAAHATNAVNALLQSVLPGSASVNAERKKTSRDKGSKAQLIDRNLKKRVEVQEKDVYRIKKREKKMLRKKISGRKEVQEDIEQKAKLQVLRKHQVDNSLTDHEKSYLDKVVKKNVRNLKSWDYDDKEELLDLQKQILANSEDSKKVRKVKSRRQKKKQFKEKLPQSIQDHRYKALTPGLAPVGASDEEESEDEDEDY</sequence>
<keyword id="KW-0539">Nucleus</keyword>
<keyword id="KW-1185">Reference proteome</keyword>
<keyword id="KW-0804">Transcription</keyword>
<keyword id="KW-0805">Transcription regulation</keyword>
<name>RRT14_KLULA</name>
<feature type="chain" id="PRO_0000404342" description="Regulator of rDNA transcription 14">
    <location>
        <begin position="1"/>
        <end position="201"/>
    </location>
</feature>
<feature type="region of interest" description="Disordered" evidence="2">
    <location>
        <begin position="24"/>
        <end position="43"/>
    </location>
</feature>
<feature type="region of interest" description="Disordered" evidence="2">
    <location>
        <begin position="147"/>
        <end position="201"/>
    </location>
</feature>
<feature type="compositionally biased region" description="Basic and acidic residues" evidence="2">
    <location>
        <begin position="29"/>
        <end position="40"/>
    </location>
</feature>
<feature type="compositionally biased region" description="Basic residues" evidence="2">
    <location>
        <begin position="149"/>
        <end position="163"/>
    </location>
</feature>
<feature type="compositionally biased region" description="Basic and acidic residues" evidence="2">
    <location>
        <begin position="164"/>
        <end position="176"/>
    </location>
</feature>
<feature type="compositionally biased region" description="Acidic residues" evidence="2">
    <location>
        <begin position="189"/>
        <end position="201"/>
    </location>
</feature>
<comment type="function">
    <text evidence="1">Involved in ribosome biogenesis, probably through modulation of rDNA transcription.</text>
</comment>
<comment type="subcellular location">
    <subcellularLocation>
        <location evidence="1">Nucleus</location>
        <location evidence="1">Nucleolus</location>
    </subcellularLocation>
</comment>
<comment type="similarity">
    <text evidence="3">Belongs to the RRT14 family.</text>
</comment>